<comment type="catalytic activity">
    <reaction evidence="1">
        <text>2-(N(omega)-L-arginino)succinate = fumarate + L-arginine</text>
        <dbReference type="Rhea" id="RHEA:24020"/>
        <dbReference type="ChEBI" id="CHEBI:29806"/>
        <dbReference type="ChEBI" id="CHEBI:32682"/>
        <dbReference type="ChEBI" id="CHEBI:57472"/>
        <dbReference type="EC" id="4.3.2.1"/>
    </reaction>
</comment>
<comment type="pathway">
    <text evidence="1">Amino-acid biosynthesis; L-arginine biosynthesis; L-arginine from L-ornithine and carbamoyl phosphate: step 3/3.</text>
</comment>
<comment type="subcellular location">
    <subcellularLocation>
        <location evidence="1">Cytoplasm</location>
    </subcellularLocation>
</comment>
<comment type="similarity">
    <text evidence="1">Belongs to the lyase 1 family. Argininosuccinate lyase subfamily.</text>
</comment>
<evidence type="ECO:0000255" key="1">
    <source>
        <dbReference type="HAMAP-Rule" id="MF_00006"/>
    </source>
</evidence>
<dbReference type="EC" id="4.3.2.1" evidence="1"/>
<dbReference type="EMBL" id="CP000382">
    <property type="protein sequence ID" value="ABK62301.1"/>
    <property type="molecule type" value="Genomic_DNA"/>
</dbReference>
<dbReference type="RefSeq" id="WP_011722632.1">
    <property type="nucleotide sequence ID" value="NC_008593.1"/>
</dbReference>
<dbReference type="SMR" id="A0Q1Z1"/>
<dbReference type="STRING" id="386415.NT01CX_0134"/>
<dbReference type="KEGG" id="cno:NT01CX_0134"/>
<dbReference type="eggNOG" id="COG0165">
    <property type="taxonomic scope" value="Bacteria"/>
</dbReference>
<dbReference type="HOGENOM" id="CLU_027272_2_3_9"/>
<dbReference type="UniPathway" id="UPA00068">
    <property type="reaction ID" value="UER00114"/>
</dbReference>
<dbReference type="Proteomes" id="UP000008220">
    <property type="component" value="Chromosome"/>
</dbReference>
<dbReference type="GO" id="GO:0005829">
    <property type="term" value="C:cytosol"/>
    <property type="evidence" value="ECO:0007669"/>
    <property type="project" value="TreeGrafter"/>
</dbReference>
<dbReference type="GO" id="GO:0004056">
    <property type="term" value="F:argininosuccinate lyase activity"/>
    <property type="evidence" value="ECO:0007669"/>
    <property type="project" value="UniProtKB-UniRule"/>
</dbReference>
<dbReference type="GO" id="GO:0042450">
    <property type="term" value="P:arginine biosynthetic process via ornithine"/>
    <property type="evidence" value="ECO:0007669"/>
    <property type="project" value="InterPro"/>
</dbReference>
<dbReference type="GO" id="GO:0006526">
    <property type="term" value="P:L-arginine biosynthetic process"/>
    <property type="evidence" value="ECO:0007669"/>
    <property type="project" value="UniProtKB-UniRule"/>
</dbReference>
<dbReference type="CDD" id="cd01359">
    <property type="entry name" value="Argininosuccinate_lyase"/>
    <property type="match status" value="1"/>
</dbReference>
<dbReference type="FunFam" id="1.10.275.10:FF:000002">
    <property type="entry name" value="Argininosuccinate lyase"/>
    <property type="match status" value="1"/>
</dbReference>
<dbReference type="FunFam" id="1.10.40.30:FF:000001">
    <property type="entry name" value="Argininosuccinate lyase"/>
    <property type="match status" value="1"/>
</dbReference>
<dbReference type="FunFam" id="1.20.200.10:FF:000002">
    <property type="entry name" value="Argininosuccinate lyase"/>
    <property type="match status" value="1"/>
</dbReference>
<dbReference type="Gene3D" id="1.10.40.30">
    <property type="entry name" value="Fumarase/aspartase (C-terminal domain)"/>
    <property type="match status" value="1"/>
</dbReference>
<dbReference type="Gene3D" id="1.20.200.10">
    <property type="entry name" value="Fumarase/aspartase (Central domain)"/>
    <property type="match status" value="1"/>
</dbReference>
<dbReference type="Gene3D" id="1.10.275.10">
    <property type="entry name" value="Fumarase/aspartase (N-terminal domain)"/>
    <property type="match status" value="1"/>
</dbReference>
<dbReference type="HAMAP" id="MF_00006">
    <property type="entry name" value="Arg_succ_lyase"/>
    <property type="match status" value="1"/>
</dbReference>
<dbReference type="InterPro" id="IPR029419">
    <property type="entry name" value="Arg_succ_lyase_C"/>
</dbReference>
<dbReference type="InterPro" id="IPR009049">
    <property type="entry name" value="Argininosuccinate_lyase"/>
</dbReference>
<dbReference type="InterPro" id="IPR024083">
    <property type="entry name" value="Fumarase/histidase_N"/>
</dbReference>
<dbReference type="InterPro" id="IPR020557">
    <property type="entry name" value="Fumarate_lyase_CS"/>
</dbReference>
<dbReference type="InterPro" id="IPR000362">
    <property type="entry name" value="Fumarate_lyase_fam"/>
</dbReference>
<dbReference type="InterPro" id="IPR022761">
    <property type="entry name" value="Fumarate_lyase_N"/>
</dbReference>
<dbReference type="InterPro" id="IPR008948">
    <property type="entry name" value="L-Aspartase-like"/>
</dbReference>
<dbReference type="NCBIfam" id="TIGR00838">
    <property type="entry name" value="argH"/>
    <property type="match status" value="1"/>
</dbReference>
<dbReference type="PANTHER" id="PTHR43814">
    <property type="entry name" value="ARGININOSUCCINATE LYASE"/>
    <property type="match status" value="1"/>
</dbReference>
<dbReference type="PANTHER" id="PTHR43814:SF1">
    <property type="entry name" value="ARGININOSUCCINATE LYASE"/>
    <property type="match status" value="1"/>
</dbReference>
<dbReference type="Pfam" id="PF14698">
    <property type="entry name" value="ASL_C2"/>
    <property type="match status" value="1"/>
</dbReference>
<dbReference type="Pfam" id="PF00206">
    <property type="entry name" value="Lyase_1"/>
    <property type="match status" value="1"/>
</dbReference>
<dbReference type="PRINTS" id="PR00145">
    <property type="entry name" value="ARGSUCLYASE"/>
</dbReference>
<dbReference type="PRINTS" id="PR00149">
    <property type="entry name" value="FUMRATELYASE"/>
</dbReference>
<dbReference type="SUPFAM" id="SSF48557">
    <property type="entry name" value="L-aspartase-like"/>
    <property type="match status" value="1"/>
</dbReference>
<dbReference type="PROSITE" id="PS00163">
    <property type="entry name" value="FUMARATE_LYASES"/>
    <property type="match status" value="1"/>
</dbReference>
<name>ARLY_CLONN</name>
<protein>
    <recommendedName>
        <fullName evidence="1">Argininosuccinate lyase</fullName>
        <shortName evidence="1">ASAL</shortName>
        <ecNumber evidence="1">4.3.2.1</ecNumber>
    </recommendedName>
    <alternativeName>
        <fullName evidence="1">Arginosuccinase</fullName>
    </alternativeName>
</protein>
<reference key="1">
    <citation type="journal article" date="2006" name="Nat. Biotechnol.">
        <title>The genome and transcriptomes of the anti-tumor agent Clostridium novyi-NT.</title>
        <authorList>
            <person name="Bettegowda C."/>
            <person name="Huang X."/>
            <person name="Lin J."/>
            <person name="Cheong I."/>
            <person name="Kohli M."/>
            <person name="Szabo S.A."/>
            <person name="Zhang X."/>
            <person name="Diaz L.A. Jr."/>
            <person name="Velculescu V.E."/>
            <person name="Parmigiani G."/>
            <person name="Kinzler K.W."/>
            <person name="Vogelstein B."/>
            <person name="Zhou S."/>
        </authorList>
    </citation>
    <scope>NUCLEOTIDE SEQUENCE [LARGE SCALE GENOMIC DNA]</scope>
    <source>
        <strain>NT</strain>
    </source>
</reference>
<keyword id="KW-0028">Amino-acid biosynthesis</keyword>
<keyword id="KW-0055">Arginine biosynthesis</keyword>
<keyword id="KW-0963">Cytoplasm</keyword>
<keyword id="KW-0456">Lyase</keyword>
<keyword id="KW-1185">Reference proteome</keyword>
<feature type="chain" id="PRO_1000000470" description="Argininosuccinate lyase">
    <location>
        <begin position="1"/>
        <end position="437"/>
    </location>
</feature>
<accession>A0Q1Z1</accession>
<organism>
    <name type="scientific">Clostridium novyi (strain NT)</name>
    <dbReference type="NCBI Taxonomy" id="386415"/>
    <lineage>
        <taxon>Bacteria</taxon>
        <taxon>Bacillati</taxon>
        <taxon>Bacillota</taxon>
        <taxon>Clostridia</taxon>
        <taxon>Eubacteriales</taxon>
        <taxon>Clostridiaceae</taxon>
        <taxon>Clostridium</taxon>
    </lineage>
</organism>
<sequence>MKLWGGRFKNAESKLMEDFNSSLKFDKRLYKEDIKGSIAHVKMLSKCGILEGEEKLIIIDGLISILDDIENGVLKIEGDYEDIHSFIEINLINRVGDVGKKLHTGRSRNDQVAVDMRMYAKSITFEIIEYINELLEVITNLADSNDVIMPGYTHLQRAQVIKFKLHMMAYYSMFNRDKKRLLSDIEVMDESPLGCGALAGTTYNIDREFTARELGFKKCVDNFMDGVSDRDYLISLLSSFSLIMMHLSRLSEELILWSSKEFDFVKISDEFSTGSSIMPQKKNPDAAELIRGKTGRVYGSLMGLLTTMKGIPLAYNKDMQEDKEGFFDAVDTVKKSLKVMSGMLSTLELKKDNMYNAVKKGFLNATEAADYLVNKGMAFRDAHGVIGAIVLYCEENKKAIEDLPLEKLKTFCDLFDEDIYDFIEYSNSLKRGIKINI</sequence>
<gene>
    <name evidence="1" type="primary">argH</name>
    <name type="ordered locus">NT01CX_0134</name>
</gene>
<proteinExistence type="inferred from homology"/>